<feature type="chain" id="PRO_0000429971" description="Probable cationic amino acid transporter">
    <location>
        <begin position="1"/>
        <end position="785"/>
    </location>
</feature>
<feature type="transmembrane region" description="Helical" evidence="2">
    <location>
        <begin position="58"/>
        <end position="78"/>
    </location>
</feature>
<feature type="transmembrane region" description="Helical" evidence="2">
    <location>
        <begin position="83"/>
        <end position="103"/>
    </location>
</feature>
<feature type="transmembrane region" description="Helical" evidence="2">
    <location>
        <begin position="119"/>
        <end position="141"/>
    </location>
</feature>
<feature type="transmembrane region" description="Helical" evidence="2">
    <location>
        <begin position="187"/>
        <end position="207"/>
    </location>
</feature>
<feature type="transmembrane region" description="Helical" evidence="2">
    <location>
        <begin position="216"/>
        <end position="236"/>
    </location>
</feature>
<feature type="transmembrane region" description="Helical" evidence="2">
    <location>
        <begin position="251"/>
        <end position="271"/>
    </location>
</feature>
<feature type="transmembrane region" description="Helical" evidence="2">
    <location>
        <begin position="291"/>
        <end position="311"/>
    </location>
</feature>
<feature type="transmembrane region" description="Helical" evidence="2">
    <location>
        <begin position="337"/>
        <end position="357"/>
    </location>
</feature>
<feature type="transmembrane region" description="Helical" evidence="2">
    <location>
        <begin position="360"/>
        <end position="380"/>
    </location>
</feature>
<feature type="transmembrane region" description="Helical" evidence="2">
    <location>
        <begin position="384"/>
        <end position="404"/>
    </location>
</feature>
<feature type="transmembrane region" description="Helical" evidence="2">
    <location>
        <begin position="407"/>
        <end position="427"/>
    </location>
</feature>
<feature type="transmembrane region" description="Helical" evidence="2">
    <location>
        <begin position="568"/>
        <end position="588"/>
    </location>
</feature>
<feature type="transmembrane region" description="Helical" evidence="2">
    <location>
        <begin position="596"/>
        <end position="616"/>
    </location>
</feature>
<feature type="transmembrane region" description="Helical" evidence="2">
    <location>
        <begin position="628"/>
        <end position="648"/>
    </location>
</feature>
<feature type="transmembrane region" description="Helical" evidence="2">
    <location>
        <begin position="655"/>
        <end position="675"/>
    </location>
</feature>
<feature type="region of interest" description="Disordered" evidence="3">
    <location>
        <begin position="715"/>
        <end position="785"/>
    </location>
</feature>
<feature type="compositionally biased region" description="Low complexity" evidence="3">
    <location>
        <begin position="727"/>
        <end position="740"/>
    </location>
</feature>
<feature type="compositionally biased region" description="Acidic residues" evidence="3">
    <location>
        <begin position="775"/>
        <end position="785"/>
    </location>
</feature>
<comment type="function">
    <text evidence="1">May be involved in arginine transport.</text>
</comment>
<comment type="subcellular location">
    <subcellularLocation>
        <location evidence="1">Lysosome membrane</location>
        <topology evidence="1">Multi-pass membrane protein</topology>
    </subcellularLocation>
</comment>
<comment type="disruption phenotype">
    <text evidence="4">Morpholino knockdown of the protein causes smaller eyes compared to wild-type animals and aberrant light-induced locomotor response.</text>
</comment>
<comment type="similarity">
    <text evidence="5">Belongs to the amino acid-polyamine-organocation (APC) superfamily.</text>
</comment>
<keyword id="KW-0458">Lysosome</keyword>
<keyword id="KW-0472">Membrane</keyword>
<keyword id="KW-1185">Reference proteome</keyword>
<keyword id="KW-0812">Transmembrane</keyword>
<keyword id="KW-1133">Transmembrane helix</keyword>
<reference key="1">
    <citation type="journal article" date="2013" name="Nature">
        <title>The zebrafish reference genome sequence and its relationship to the human genome.</title>
        <authorList>
            <person name="Howe K."/>
            <person name="Clark M.D."/>
            <person name="Torroja C.F."/>
            <person name="Torrance J."/>
            <person name="Berthelot C."/>
            <person name="Muffato M."/>
            <person name="Collins J.E."/>
            <person name="Humphray S."/>
            <person name="McLaren K."/>
            <person name="Matthews L."/>
            <person name="McLaren S."/>
            <person name="Sealy I."/>
            <person name="Caccamo M."/>
            <person name="Churcher C."/>
            <person name="Scott C."/>
            <person name="Barrett J.C."/>
            <person name="Koch R."/>
            <person name="Rauch G.J."/>
            <person name="White S."/>
            <person name="Chow W."/>
            <person name="Kilian B."/>
            <person name="Quintais L.T."/>
            <person name="Guerra-Assuncao J.A."/>
            <person name="Zhou Y."/>
            <person name="Gu Y."/>
            <person name="Yen J."/>
            <person name="Vogel J.H."/>
            <person name="Eyre T."/>
            <person name="Redmond S."/>
            <person name="Banerjee R."/>
            <person name="Chi J."/>
            <person name="Fu B."/>
            <person name="Langley E."/>
            <person name="Maguire S.F."/>
            <person name="Laird G.K."/>
            <person name="Lloyd D."/>
            <person name="Kenyon E."/>
            <person name="Donaldson S."/>
            <person name="Sehra H."/>
            <person name="Almeida-King J."/>
            <person name="Loveland J."/>
            <person name="Trevanion S."/>
            <person name="Jones M."/>
            <person name="Quail M."/>
            <person name="Willey D."/>
            <person name="Hunt A."/>
            <person name="Burton J."/>
            <person name="Sims S."/>
            <person name="McLay K."/>
            <person name="Plumb B."/>
            <person name="Davis J."/>
            <person name="Clee C."/>
            <person name="Oliver K."/>
            <person name="Clark R."/>
            <person name="Riddle C."/>
            <person name="Elliot D."/>
            <person name="Threadgold G."/>
            <person name="Harden G."/>
            <person name="Ware D."/>
            <person name="Begum S."/>
            <person name="Mortimore B."/>
            <person name="Kerry G."/>
            <person name="Heath P."/>
            <person name="Phillimore B."/>
            <person name="Tracey A."/>
            <person name="Corby N."/>
            <person name="Dunn M."/>
            <person name="Johnson C."/>
            <person name="Wood J."/>
            <person name="Clark S."/>
            <person name="Pelan S."/>
            <person name="Griffiths G."/>
            <person name="Smith M."/>
            <person name="Glithero R."/>
            <person name="Howden P."/>
            <person name="Barker N."/>
            <person name="Lloyd C."/>
            <person name="Stevens C."/>
            <person name="Harley J."/>
            <person name="Holt K."/>
            <person name="Panagiotidis G."/>
            <person name="Lovell J."/>
            <person name="Beasley H."/>
            <person name="Henderson C."/>
            <person name="Gordon D."/>
            <person name="Auger K."/>
            <person name="Wright D."/>
            <person name="Collins J."/>
            <person name="Raisen C."/>
            <person name="Dyer L."/>
            <person name="Leung K."/>
            <person name="Robertson L."/>
            <person name="Ambridge K."/>
            <person name="Leongamornlert D."/>
            <person name="McGuire S."/>
            <person name="Gilderthorp R."/>
            <person name="Griffiths C."/>
            <person name="Manthravadi D."/>
            <person name="Nichol S."/>
            <person name="Barker G."/>
            <person name="Whitehead S."/>
            <person name="Kay M."/>
            <person name="Brown J."/>
            <person name="Murnane C."/>
            <person name="Gray E."/>
            <person name="Humphries M."/>
            <person name="Sycamore N."/>
            <person name="Barker D."/>
            <person name="Saunders D."/>
            <person name="Wallis J."/>
            <person name="Babbage A."/>
            <person name="Hammond S."/>
            <person name="Mashreghi-Mohammadi M."/>
            <person name="Barr L."/>
            <person name="Martin S."/>
            <person name="Wray P."/>
            <person name="Ellington A."/>
            <person name="Matthews N."/>
            <person name="Ellwood M."/>
            <person name="Woodmansey R."/>
            <person name="Clark G."/>
            <person name="Cooper J."/>
            <person name="Tromans A."/>
            <person name="Grafham D."/>
            <person name="Skuce C."/>
            <person name="Pandian R."/>
            <person name="Andrews R."/>
            <person name="Harrison E."/>
            <person name="Kimberley A."/>
            <person name="Garnett J."/>
            <person name="Fosker N."/>
            <person name="Hall R."/>
            <person name="Garner P."/>
            <person name="Kelly D."/>
            <person name="Bird C."/>
            <person name="Palmer S."/>
            <person name="Gehring I."/>
            <person name="Berger A."/>
            <person name="Dooley C.M."/>
            <person name="Ersan-Urun Z."/>
            <person name="Eser C."/>
            <person name="Geiger H."/>
            <person name="Geisler M."/>
            <person name="Karotki L."/>
            <person name="Kirn A."/>
            <person name="Konantz J."/>
            <person name="Konantz M."/>
            <person name="Oberlander M."/>
            <person name="Rudolph-Geiger S."/>
            <person name="Teucke M."/>
            <person name="Lanz C."/>
            <person name="Raddatz G."/>
            <person name="Osoegawa K."/>
            <person name="Zhu B."/>
            <person name="Rapp A."/>
            <person name="Widaa S."/>
            <person name="Langford C."/>
            <person name="Yang F."/>
            <person name="Schuster S.C."/>
            <person name="Carter N.P."/>
            <person name="Harrow J."/>
            <person name="Ning Z."/>
            <person name="Herrero J."/>
            <person name="Searle S.M."/>
            <person name="Enright A."/>
            <person name="Geisler R."/>
            <person name="Plasterk R.H."/>
            <person name="Lee C."/>
            <person name="Westerfield M."/>
            <person name="de Jong P.J."/>
            <person name="Zon L.I."/>
            <person name="Postlethwait J.H."/>
            <person name="Nusslein-Volhard C."/>
            <person name="Hubbard T.J."/>
            <person name="Roest Crollius H."/>
            <person name="Rogers J."/>
            <person name="Stemple D.L."/>
        </authorList>
    </citation>
    <scope>NUCLEOTIDE SEQUENCE [LARGE SCALE GENOMIC DNA]</scope>
    <source>
        <strain>Tuebingen</strain>
    </source>
</reference>
<reference key="2">
    <citation type="journal article" date="2014" name="Nat. Commun.">
        <title>SLC7A14 linked to autosomal recessive retinitis pigmentosa.</title>
        <authorList>
            <person name="Jin Z.B."/>
            <person name="Huang X.F."/>
            <person name="Lv J.N."/>
            <person name="Xiang L."/>
            <person name="Li D.Q."/>
            <person name="Chen J."/>
            <person name="Huang C."/>
            <person name="Wu J."/>
            <person name="Lu F."/>
            <person name="Qu J."/>
        </authorList>
    </citation>
    <scope>DISRUPTION PHENOTYPE</scope>
</reference>
<sequence length="785" mass="84887">MSGLFAKLDPRRVQWGANWFAFRSRVLRTKPVESMLETSGGTGAHGTKLARVLSTVDLVSLGVGSCVGTGMYVVSGLVAKEMAGPGVIVSFIIAAVASILSGVCYAEFGVRVPKTTGSAYTYSYVTVGEFVAFFIGWNLILEYLIGTAAGASALSSMFDSLANHSISGFMINHIGTLNGLGKGEQSYPDILALVIGILVTVIVALGVKNSVGFNNVLNVINLVVWVFIMIAGLFFVSGSNWDEGRFLPYGWSGVMQGAATCFYAFIGFDIIATTGEEAKSPNTSIPYAITASLVTCLTAYVSVSVILTLMVPYTEIDSDAPLMEMFSLHGFQTAKYIVAIGSIAGLTVSLLGSLFPMPRVIYAMAGDGLLFRFLAHVSTYTETPAVACVVSGFLSALLALLVSLRDLIEMMSIGTLLAYTLVSVCVLLLRYQPEGDIHGFVNFLSEQNSKRKEGVLAECEKEACSPVSEGDDYGGVPTNTCGAKNLPSLGDNEMLIGKPDKSTYTASHPNYGTVDMSSGIESDETDSAYLLKLKKLLGPRYYTMRIRLGLPGKMDRPTVATGRIVTRCVVLLFILIFCFCSLIIFGSGQIADGQWWAVLLLVVLLLVLTLLVFIIIQQPENPKRLPYMAPCVPFVPASAMLVNVYLMLKLSTITWIRFGVWCFVGVLIYFGYGMWNSTLEITAREEEAHASTYQRYDMGVDDNFAVDDDLYPSGDQGPFQNWGKGGQQKQPQQEQSEPQSDGLDRLDNHRTSSSSSHSRAKSKASKPSPGFEALVVDDDLDDPLE</sequence>
<dbReference type="EMBL" id="CR392026">
    <property type="status" value="NOT_ANNOTATED_CDS"/>
    <property type="molecule type" value="Genomic_DNA"/>
</dbReference>
<dbReference type="EMBL" id="CR450771">
    <property type="status" value="NOT_ANNOTATED_CDS"/>
    <property type="molecule type" value="Genomic_DNA"/>
</dbReference>
<dbReference type="RefSeq" id="NP_001334618.1">
    <property type="nucleotide sequence ID" value="NM_001347689.1"/>
</dbReference>
<dbReference type="RefSeq" id="XP_694632.2">
    <property type="nucleotide sequence ID" value="XM_689540.5"/>
</dbReference>
<dbReference type="SMR" id="B0UYF2"/>
<dbReference type="FunCoup" id="B0UYF2">
    <property type="interactions" value="457"/>
</dbReference>
<dbReference type="STRING" id="7955.ENSDARP00000115765"/>
<dbReference type="PaxDb" id="7955-ENSDARP00000038463"/>
<dbReference type="Ensembl" id="ENSDART00000137746">
    <property type="protein sequence ID" value="ENSDARP00000115765"/>
    <property type="gene ID" value="ENSDARG00000010816"/>
</dbReference>
<dbReference type="Ensembl" id="ENSDART00000178841">
    <property type="protein sequence ID" value="ENSDARP00000144454"/>
    <property type="gene ID" value="ENSDARG00000010816"/>
</dbReference>
<dbReference type="Ensembl" id="ENSDART00000187743">
    <property type="protein sequence ID" value="ENSDARP00000149405"/>
    <property type="gene ID" value="ENSDARG00000010816"/>
</dbReference>
<dbReference type="GeneID" id="566270"/>
<dbReference type="KEGG" id="dre:566270"/>
<dbReference type="AGR" id="ZFIN:ZDB-GENE-070912-112"/>
<dbReference type="CTD" id="566270"/>
<dbReference type="ZFIN" id="ZDB-GENE-070912-112">
    <property type="gene designation" value="slc7a14a"/>
</dbReference>
<dbReference type="eggNOG" id="KOG1286">
    <property type="taxonomic scope" value="Eukaryota"/>
</dbReference>
<dbReference type="HOGENOM" id="CLU_007946_15_7_1"/>
<dbReference type="InParanoid" id="B0UYF2"/>
<dbReference type="OMA" id="GFVMYFY"/>
<dbReference type="OrthoDB" id="3900342at2759"/>
<dbReference type="PhylomeDB" id="B0UYF2"/>
<dbReference type="TreeFam" id="TF315212"/>
<dbReference type="PRO" id="PR:B0UYF2"/>
<dbReference type="Proteomes" id="UP000000437">
    <property type="component" value="Chromosome 2"/>
</dbReference>
<dbReference type="Bgee" id="ENSDARG00000010816">
    <property type="expression patterns" value="Expressed in brain and 14 other cell types or tissues"/>
</dbReference>
<dbReference type="ExpressionAtlas" id="B0UYF2">
    <property type="expression patterns" value="baseline and differential"/>
</dbReference>
<dbReference type="GO" id="GO:0005765">
    <property type="term" value="C:lysosomal membrane"/>
    <property type="evidence" value="ECO:0007669"/>
    <property type="project" value="UniProtKB-SubCell"/>
</dbReference>
<dbReference type="GO" id="GO:0005886">
    <property type="term" value="C:plasma membrane"/>
    <property type="evidence" value="ECO:0000318"/>
    <property type="project" value="GO_Central"/>
</dbReference>
<dbReference type="GO" id="GO:0015171">
    <property type="term" value="F:amino acid transmembrane transporter activity"/>
    <property type="evidence" value="ECO:0000318"/>
    <property type="project" value="GO_Central"/>
</dbReference>
<dbReference type="GO" id="GO:0006865">
    <property type="term" value="P:amino acid transport"/>
    <property type="evidence" value="ECO:0000318"/>
    <property type="project" value="GO_Central"/>
</dbReference>
<dbReference type="GO" id="GO:0001654">
    <property type="term" value="P:eye development"/>
    <property type="evidence" value="ECO:0000315"/>
    <property type="project" value="ZFIN"/>
</dbReference>
<dbReference type="FunFam" id="1.20.1740.10:FF:000010">
    <property type="entry name" value="probable cationic amino acid transporter"/>
    <property type="match status" value="1"/>
</dbReference>
<dbReference type="Gene3D" id="1.20.1740.10">
    <property type="entry name" value="Amino acid/polyamine transporter I"/>
    <property type="match status" value="1"/>
</dbReference>
<dbReference type="InterPro" id="IPR002293">
    <property type="entry name" value="AA/rel_permease1"/>
</dbReference>
<dbReference type="InterPro" id="IPR029485">
    <property type="entry name" value="CAT_C"/>
</dbReference>
<dbReference type="PANTHER" id="PTHR43243:SF25">
    <property type="entry name" value="CATIONIC AMINO ACID TRANSPORTER-RELATED"/>
    <property type="match status" value="1"/>
</dbReference>
<dbReference type="PANTHER" id="PTHR43243">
    <property type="entry name" value="INNER MEMBRANE TRANSPORTER YGJI-RELATED"/>
    <property type="match status" value="1"/>
</dbReference>
<dbReference type="Pfam" id="PF13520">
    <property type="entry name" value="AA_permease_2"/>
    <property type="match status" value="1"/>
</dbReference>
<dbReference type="Pfam" id="PF13906">
    <property type="entry name" value="AA_permease_C"/>
    <property type="match status" value="1"/>
</dbReference>
<accession>B0UYF2</accession>
<evidence type="ECO:0000250" key="1"/>
<evidence type="ECO:0000255" key="2"/>
<evidence type="ECO:0000256" key="3">
    <source>
        <dbReference type="SAM" id="MobiDB-lite"/>
    </source>
</evidence>
<evidence type="ECO:0000269" key="4">
    <source>
    </source>
</evidence>
<evidence type="ECO:0000305" key="5"/>
<organism>
    <name type="scientific">Danio rerio</name>
    <name type="common">Zebrafish</name>
    <name type="synonym">Brachydanio rerio</name>
    <dbReference type="NCBI Taxonomy" id="7955"/>
    <lineage>
        <taxon>Eukaryota</taxon>
        <taxon>Metazoa</taxon>
        <taxon>Chordata</taxon>
        <taxon>Craniata</taxon>
        <taxon>Vertebrata</taxon>
        <taxon>Euteleostomi</taxon>
        <taxon>Actinopterygii</taxon>
        <taxon>Neopterygii</taxon>
        <taxon>Teleostei</taxon>
        <taxon>Ostariophysi</taxon>
        <taxon>Cypriniformes</taxon>
        <taxon>Danionidae</taxon>
        <taxon>Danioninae</taxon>
        <taxon>Danio</taxon>
    </lineage>
</organism>
<protein>
    <recommendedName>
        <fullName>Probable cationic amino acid transporter</fullName>
    </recommendedName>
    <alternativeName>
        <fullName>Solute carrier family 7 member 14</fullName>
    </alternativeName>
</protein>
<proteinExistence type="inferred from homology"/>
<gene>
    <name type="primary">slc7a14a</name>
</gene>
<name>S7A14_DANRE</name>